<accession>A1KMN8</accession>
<organism>
    <name type="scientific">Mycobacterium bovis (strain BCG / Pasteur 1173P2)</name>
    <dbReference type="NCBI Taxonomy" id="410289"/>
    <lineage>
        <taxon>Bacteria</taxon>
        <taxon>Bacillati</taxon>
        <taxon>Actinomycetota</taxon>
        <taxon>Actinomycetes</taxon>
        <taxon>Mycobacteriales</taxon>
        <taxon>Mycobacteriaceae</taxon>
        <taxon>Mycobacterium</taxon>
        <taxon>Mycobacterium tuberculosis complex</taxon>
    </lineage>
</organism>
<name>XERC_MYCBP</name>
<gene>
    <name evidence="1" type="primary">xerC</name>
    <name type="ordered locus">BCG_2915c</name>
</gene>
<evidence type="ECO:0000255" key="1">
    <source>
        <dbReference type="HAMAP-Rule" id="MF_01808"/>
    </source>
</evidence>
<evidence type="ECO:0000255" key="2">
    <source>
        <dbReference type="PROSITE-ProRule" id="PRU01246"/>
    </source>
</evidence>
<evidence type="ECO:0000255" key="3">
    <source>
        <dbReference type="PROSITE-ProRule" id="PRU01248"/>
    </source>
</evidence>
<protein>
    <recommendedName>
        <fullName evidence="1">Tyrosine recombinase XerC</fullName>
    </recommendedName>
</protein>
<keyword id="KW-0131">Cell cycle</keyword>
<keyword id="KW-0132">Cell division</keyword>
<keyword id="KW-0159">Chromosome partition</keyword>
<keyword id="KW-0963">Cytoplasm</keyword>
<keyword id="KW-0229">DNA integration</keyword>
<keyword id="KW-0233">DNA recombination</keyword>
<keyword id="KW-0238">DNA-binding</keyword>
<sequence length="298" mass="31980">MQAILDEFDEYLALQCGRSVHTRRAYLGDLRSLFAFLADRGSSLDALTLSVLRSWLAATAGAGAARTTLARRTSAVKAFTAWAVRRGLLAGDPAARLQVPKARRTLPAVLRQDQALRAMAAAESGAEQGDPLALRDRLIVELLYATGIRVSELCGLDVDDIDTGHRLVRVLGKGNKQRTVPFGQPAADALHAWLVDGRRALVTAESGHALLLGARGRRLDVRQARTAVHQTVAAVDGAPDMGPHGLRHSAATHLLEGGADLRVVQELLGHSSLATTQLYTHVAVARLRAVHERAHPRA</sequence>
<dbReference type="EMBL" id="AM408590">
    <property type="protein sequence ID" value="CAL72904.1"/>
    <property type="molecule type" value="Genomic_DNA"/>
</dbReference>
<dbReference type="RefSeq" id="WP_003414689.1">
    <property type="nucleotide sequence ID" value="NC_008769.1"/>
</dbReference>
<dbReference type="SMR" id="A1KMN8"/>
<dbReference type="KEGG" id="mbb:BCG_2915c"/>
<dbReference type="HOGENOM" id="CLU_027562_9_0_11"/>
<dbReference type="Proteomes" id="UP000001472">
    <property type="component" value="Chromosome"/>
</dbReference>
<dbReference type="GO" id="GO:0005737">
    <property type="term" value="C:cytoplasm"/>
    <property type="evidence" value="ECO:0007669"/>
    <property type="project" value="UniProtKB-SubCell"/>
</dbReference>
<dbReference type="GO" id="GO:0003677">
    <property type="term" value="F:DNA binding"/>
    <property type="evidence" value="ECO:0007669"/>
    <property type="project" value="UniProtKB-KW"/>
</dbReference>
<dbReference type="GO" id="GO:0009037">
    <property type="term" value="F:tyrosine-based site-specific recombinase activity"/>
    <property type="evidence" value="ECO:0007669"/>
    <property type="project" value="UniProtKB-UniRule"/>
</dbReference>
<dbReference type="GO" id="GO:0051301">
    <property type="term" value="P:cell division"/>
    <property type="evidence" value="ECO:0007669"/>
    <property type="project" value="UniProtKB-KW"/>
</dbReference>
<dbReference type="GO" id="GO:0007059">
    <property type="term" value="P:chromosome segregation"/>
    <property type="evidence" value="ECO:0007669"/>
    <property type="project" value="UniProtKB-UniRule"/>
</dbReference>
<dbReference type="GO" id="GO:0006313">
    <property type="term" value="P:DNA transposition"/>
    <property type="evidence" value="ECO:0007669"/>
    <property type="project" value="UniProtKB-UniRule"/>
</dbReference>
<dbReference type="CDD" id="cd00798">
    <property type="entry name" value="INT_XerDC_C"/>
    <property type="match status" value="1"/>
</dbReference>
<dbReference type="FunFam" id="1.10.443.10:FF:000007">
    <property type="entry name" value="Tyrosine recombinase XerC"/>
    <property type="match status" value="1"/>
</dbReference>
<dbReference type="Gene3D" id="1.10.150.130">
    <property type="match status" value="1"/>
</dbReference>
<dbReference type="Gene3D" id="1.10.443.10">
    <property type="entry name" value="Intergrase catalytic core"/>
    <property type="match status" value="1"/>
</dbReference>
<dbReference type="HAMAP" id="MF_01808">
    <property type="entry name" value="Recomb_XerC_XerD"/>
    <property type="match status" value="1"/>
</dbReference>
<dbReference type="InterPro" id="IPR044068">
    <property type="entry name" value="CB"/>
</dbReference>
<dbReference type="InterPro" id="IPR011010">
    <property type="entry name" value="DNA_brk_join_enz"/>
</dbReference>
<dbReference type="InterPro" id="IPR013762">
    <property type="entry name" value="Integrase-like_cat_sf"/>
</dbReference>
<dbReference type="InterPro" id="IPR002104">
    <property type="entry name" value="Integrase_catalytic"/>
</dbReference>
<dbReference type="InterPro" id="IPR010998">
    <property type="entry name" value="Integrase_recombinase_N"/>
</dbReference>
<dbReference type="InterPro" id="IPR004107">
    <property type="entry name" value="Integrase_SAM-like_N"/>
</dbReference>
<dbReference type="InterPro" id="IPR023009">
    <property type="entry name" value="Tyrosine_recombinase_XerC/XerD"/>
</dbReference>
<dbReference type="InterPro" id="IPR050090">
    <property type="entry name" value="Tyrosine_recombinase_XerCD"/>
</dbReference>
<dbReference type="NCBIfam" id="NF001399">
    <property type="entry name" value="PRK00283.1"/>
    <property type="match status" value="1"/>
</dbReference>
<dbReference type="PANTHER" id="PTHR30349">
    <property type="entry name" value="PHAGE INTEGRASE-RELATED"/>
    <property type="match status" value="1"/>
</dbReference>
<dbReference type="PANTHER" id="PTHR30349:SF77">
    <property type="entry name" value="TYROSINE RECOMBINASE XERC"/>
    <property type="match status" value="1"/>
</dbReference>
<dbReference type="Pfam" id="PF02899">
    <property type="entry name" value="Phage_int_SAM_1"/>
    <property type="match status" value="1"/>
</dbReference>
<dbReference type="Pfam" id="PF00589">
    <property type="entry name" value="Phage_integrase"/>
    <property type="match status" value="1"/>
</dbReference>
<dbReference type="SUPFAM" id="SSF56349">
    <property type="entry name" value="DNA breaking-rejoining enzymes"/>
    <property type="match status" value="1"/>
</dbReference>
<dbReference type="PROSITE" id="PS51900">
    <property type="entry name" value="CB"/>
    <property type="match status" value="1"/>
</dbReference>
<dbReference type="PROSITE" id="PS51898">
    <property type="entry name" value="TYR_RECOMBINASE"/>
    <property type="match status" value="1"/>
</dbReference>
<reference key="1">
    <citation type="journal article" date="2007" name="Proc. Natl. Acad. Sci. U.S.A.">
        <title>Genome plasticity of BCG and impact on vaccine efficacy.</title>
        <authorList>
            <person name="Brosch R."/>
            <person name="Gordon S.V."/>
            <person name="Garnier T."/>
            <person name="Eiglmeier K."/>
            <person name="Frigui W."/>
            <person name="Valenti P."/>
            <person name="Dos Santos S."/>
            <person name="Duthoy S."/>
            <person name="Lacroix C."/>
            <person name="Garcia-Pelayo C."/>
            <person name="Inwald J.K."/>
            <person name="Golby P."/>
            <person name="Garcia J.N."/>
            <person name="Hewinson R.G."/>
            <person name="Behr M.A."/>
            <person name="Quail M.A."/>
            <person name="Churcher C."/>
            <person name="Barrell B.G."/>
            <person name="Parkhill J."/>
            <person name="Cole S.T."/>
        </authorList>
    </citation>
    <scope>NUCLEOTIDE SEQUENCE [LARGE SCALE GENOMIC DNA]</scope>
    <source>
        <strain>BCG / Pasteur 1173P2</strain>
    </source>
</reference>
<proteinExistence type="inferred from homology"/>
<feature type="chain" id="PRO_1000070012" description="Tyrosine recombinase XerC">
    <location>
        <begin position="1"/>
        <end position="298"/>
    </location>
</feature>
<feature type="domain" description="Core-binding (CB)" evidence="3">
    <location>
        <begin position="1"/>
        <end position="84"/>
    </location>
</feature>
<feature type="domain" description="Tyr recombinase" evidence="2">
    <location>
        <begin position="105"/>
        <end position="292"/>
    </location>
</feature>
<feature type="active site" evidence="1">
    <location>
        <position position="149"/>
    </location>
</feature>
<feature type="active site" evidence="1">
    <location>
        <position position="173"/>
    </location>
</feature>
<feature type="active site" evidence="1">
    <location>
        <position position="244"/>
    </location>
</feature>
<feature type="active site" evidence="1">
    <location>
        <position position="247"/>
    </location>
</feature>
<feature type="active site" evidence="1">
    <location>
        <position position="270"/>
    </location>
</feature>
<feature type="active site" description="O-(3'-phospho-DNA)-tyrosine intermediate" evidence="1">
    <location>
        <position position="279"/>
    </location>
</feature>
<comment type="function">
    <text evidence="1">Site-specific tyrosine recombinase, which acts by catalyzing the cutting and rejoining of the recombining DNA molecules. The XerC-XerD complex is essential to convert dimers of the bacterial chromosome into monomers to permit their segregation at cell division. It also contributes to the segregational stability of plasmids.</text>
</comment>
<comment type="subunit">
    <text evidence="1">Forms a cyclic heterotetrameric complex composed of two molecules of XerC and two molecules of XerD.</text>
</comment>
<comment type="subcellular location">
    <subcellularLocation>
        <location evidence="1">Cytoplasm</location>
    </subcellularLocation>
</comment>
<comment type="similarity">
    <text evidence="1">Belongs to the 'phage' integrase family. XerC subfamily.</text>
</comment>